<organism>
    <name type="scientific">Arthrobacter sp. (strain FB24)</name>
    <dbReference type="NCBI Taxonomy" id="290399"/>
    <lineage>
        <taxon>Bacteria</taxon>
        <taxon>Bacillati</taxon>
        <taxon>Actinomycetota</taxon>
        <taxon>Actinomycetes</taxon>
        <taxon>Micrococcales</taxon>
        <taxon>Micrococcaceae</taxon>
        <taxon>Arthrobacter</taxon>
    </lineage>
</organism>
<reference key="1">
    <citation type="journal article" date="2013" name="Stand. Genomic Sci.">
        <title>Complete genome sequence of Arthrobacter sp. strain FB24.</title>
        <authorList>
            <person name="Nakatsu C.H."/>
            <person name="Barabote R."/>
            <person name="Thompson S."/>
            <person name="Bruce D."/>
            <person name="Detter C."/>
            <person name="Brettin T."/>
            <person name="Han C."/>
            <person name="Beasley F."/>
            <person name="Chen W."/>
            <person name="Konopka A."/>
            <person name="Xie G."/>
        </authorList>
    </citation>
    <scope>NUCLEOTIDE SEQUENCE [LARGE SCALE GENOMIC DNA]</scope>
    <source>
        <strain>FB24</strain>
    </source>
</reference>
<protein>
    <recommendedName>
        <fullName evidence="1">Serine--tRNA ligase</fullName>
        <ecNumber evidence="1">6.1.1.11</ecNumber>
    </recommendedName>
    <alternativeName>
        <fullName evidence="1">Seryl-tRNA synthetase</fullName>
        <shortName evidence="1">SerRS</shortName>
    </alternativeName>
    <alternativeName>
        <fullName evidence="1">Seryl-tRNA(Ser/Sec) synthetase</fullName>
    </alternativeName>
</protein>
<gene>
    <name evidence="1" type="primary">serS</name>
    <name type="ordered locus">Arth_0140</name>
</gene>
<feature type="chain" id="PRO_1000019612" description="Serine--tRNA ligase">
    <location>
        <begin position="1"/>
        <end position="426"/>
    </location>
</feature>
<feature type="binding site" evidence="1">
    <location>
        <begin position="228"/>
        <end position="230"/>
    </location>
    <ligand>
        <name>L-serine</name>
        <dbReference type="ChEBI" id="CHEBI:33384"/>
    </ligand>
</feature>
<feature type="binding site" evidence="1">
    <location>
        <begin position="259"/>
        <end position="261"/>
    </location>
    <ligand>
        <name>ATP</name>
        <dbReference type="ChEBI" id="CHEBI:30616"/>
    </ligand>
</feature>
<feature type="binding site" evidence="1">
    <location>
        <position position="275"/>
    </location>
    <ligand>
        <name>ATP</name>
        <dbReference type="ChEBI" id="CHEBI:30616"/>
    </ligand>
</feature>
<feature type="binding site" evidence="1">
    <location>
        <position position="282"/>
    </location>
    <ligand>
        <name>L-serine</name>
        <dbReference type="ChEBI" id="CHEBI:33384"/>
    </ligand>
</feature>
<feature type="binding site" evidence="1">
    <location>
        <begin position="346"/>
        <end position="349"/>
    </location>
    <ligand>
        <name>ATP</name>
        <dbReference type="ChEBI" id="CHEBI:30616"/>
    </ligand>
</feature>
<feature type="binding site" evidence="1">
    <location>
        <position position="386"/>
    </location>
    <ligand>
        <name>L-serine</name>
        <dbReference type="ChEBI" id="CHEBI:33384"/>
    </ligand>
</feature>
<proteinExistence type="inferred from homology"/>
<name>SYS_ARTS2</name>
<keyword id="KW-0030">Aminoacyl-tRNA synthetase</keyword>
<keyword id="KW-0067">ATP-binding</keyword>
<keyword id="KW-0963">Cytoplasm</keyword>
<keyword id="KW-0436">Ligase</keyword>
<keyword id="KW-0547">Nucleotide-binding</keyword>
<keyword id="KW-0648">Protein biosynthesis</keyword>
<keyword id="KW-1185">Reference proteome</keyword>
<dbReference type="EC" id="6.1.1.11" evidence="1"/>
<dbReference type="EMBL" id="CP000454">
    <property type="protein sequence ID" value="ABK01541.1"/>
    <property type="molecule type" value="Genomic_DNA"/>
</dbReference>
<dbReference type="RefSeq" id="WP_011690011.1">
    <property type="nucleotide sequence ID" value="NC_008541.1"/>
</dbReference>
<dbReference type="SMR" id="A0JR71"/>
<dbReference type="STRING" id="290399.Arth_0140"/>
<dbReference type="KEGG" id="art:Arth_0140"/>
<dbReference type="eggNOG" id="COG0172">
    <property type="taxonomic scope" value="Bacteria"/>
</dbReference>
<dbReference type="HOGENOM" id="CLU_023797_0_1_11"/>
<dbReference type="OrthoDB" id="9804647at2"/>
<dbReference type="UniPathway" id="UPA00906">
    <property type="reaction ID" value="UER00895"/>
</dbReference>
<dbReference type="Proteomes" id="UP000000754">
    <property type="component" value="Chromosome"/>
</dbReference>
<dbReference type="GO" id="GO:0005737">
    <property type="term" value="C:cytoplasm"/>
    <property type="evidence" value="ECO:0007669"/>
    <property type="project" value="UniProtKB-SubCell"/>
</dbReference>
<dbReference type="GO" id="GO:0005524">
    <property type="term" value="F:ATP binding"/>
    <property type="evidence" value="ECO:0007669"/>
    <property type="project" value="UniProtKB-UniRule"/>
</dbReference>
<dbReference type="GO" id="GO:0004828">
    <property type="term" value="F:serine-tRNA ligase activity"/>
    <property type="evidence" value="ECO:0007669"/>
    <property type="project" value="UniProtKB-UniRule"/>
</dbReference>
<dbReference type="GO" id="GO:0016260">
    <property type="term" value="P:selenocysteine biosynthetic process"/>
    <property type="evidence" value="ECO:0007669"/>
    <property type="project" value="UniProtKB-UniRule"/>
</dbReference>
<dbReference type="GO" id="GO:0006434">
    <property type="term" value="P:seryl-tRNA aminoacylation"/>
    <property type="evidence" value="ECO:0007669"/>
    <property type="project" value="UniProtKB-UniRule"/>
</dbReference>
<dbReference type="CDD" id="cd00770">
    <property type="entry name" value="SerRS_core"/>
    <property type="match status" value="1"/>
</dbReference>
<dbReference type="Gene3D" id="3.30.930.10">
    <property type="entry name" value="Bira Bifunctional Protein, Domain 2"/>
    <property type="match status" value="1"/>
</dbReference>
<dbReference type="Gene3D" id="1.10.287.40">
    <property type="entry name" value="Serine-tRNA synthetase, tRNA binding domain"/>
    <property type="match status" value="1"/>
</dbReference>
<dbReference type="HAMAP" id="MF_00176">
    <property type="entry name" value="Ser_tRNA_synth_type1"/>
    <property type="match status" value="1"/>
</dbReference>
<dbReference type="InterPro" id="IPR002314">
    <property type="entry name" value="aa-tRNA-synt_IIb"/>
</dbReference>
<dbReference type="InterPro" id="IPR006195">
    <property type="entry name" value="aa-tRNA-synth_II"/>
</dbReference>
<dbReference type="InterPro" id="IPR045864">
    <property type="entry name" value="aa-tRNA-synth_II/BPL/LPL"/>
</dbReference>
<dbReference type="InterPro" id="IPR002317">
    <property type="entry name" value="Ser-tRNA-ligase_type_1"/>
</dbReference>
<dbReference type="InterPro" id="IPR015866">
    <property type="entry name" value="Ser-tRNA-synth_1_N"/>
</dbReference>
<dbReference type="InterPro" id="IPR042103">
    <property type="entry name" value="SerRS_1_N_sf"/>
</dbReference>
<dbReference type="InterPro" id="IPR033729">
    <property type="entry name" value="SerRS_core"/>
</dbReference>
<dbReference type="InterPro" id="IPR010978">
    <property type="entry name" value="tRNA-bd_arm"/>
</dbReference>
<dbReference type="NCBIfam" id="TIGR00414">
    <property type="entry name" value="serS"/>
    <property type="match status" value="1"/>
</dbReference>
<dbReference type="PANTHER" id="PTHR11778">
    <property type="entry name" value="SERYL-TRNA SYNTHETASE"/>
    <property type="match status" value="1"/>
</dbReference>
<dbReference type="Pfam" id="PF02403">
    <property type="entry name" value="Seryl_tRNA_N"/>
    <property type="match status" value="1"/>
</dbReference>
<dbReference type="Pfam" id="PF00587">
    <property type="entry name" value="tRNA-synt_2b"/>
    <property type="match status" value="1"/>
</dbReference>
<dbReference type="PIRSF" id="PIRSF001529">
    <property type="entry name" value="Ser-tRNA-synth_IIa"/>
    <property type="match status" value="1"/>
</dbReference>
<dbReference type="PRINTS" id="PR00981">
    <property type="entry name" value="TRNASYNTHSER"/>
</dbReference>
<dbReference type="SUPFAM" id="SSF55681">
    <property type="entry name" value="Class II aaRS and biotin synthetases"/>
    <property type="match status" value="1"/>
</dbReference>
<dbReference type="SUPFAM" id="SSF46589">
    <property type="entry name" value="tRNA-binding arm"/>
    <property type="match status" value="1"/>
</dbReference>
<dbReference type="PROSITE" id="PS50862">
    <property type="entry name" value="AA_TRNA_LIGASE_II"/>
    <property type="match status" value="1"/>
</dbReference>
<evidence type="ECO:0000255" key="1">
    <source>
        <dbReference type="HAMAP-Rule" id="MF_00176"/>
    </source>
</evidence>
<sequence>MIDVKDLSENPDKFRASQRARGADESVVDAIISADAARRAALIRFENLRAEQNAFGKKVAQAKGEEKQALLAEVKVLAASVKAASAEADVAQAQQEELLRAIPNLIVDGVPEGGEDDYIVVKTVGEPREFPDFEPKDHLEIGELIGAIDMERGAKVSGSRFYFLRGVGARLEMALLQMAMEQAIDAGFIPMITPTLVRPETMQGTGFDVKHDAEIYRLAEDDLYLVGTSEVALAGYHADEILDLSAGPIRYAGQSSCYRREAGSHGKDTRGIIRVHQFNKVEMFIYTTVEEAAAEHERLLAWEEEMLAKCELPYRVIDTAAGDLGNSAARKFDCEAWVPTQGAYRELTSTSNCTTFQARRLNIRERVLNEDGAPKGTRAVATLNGTLATTRWIVAILEHHQNEDGSVNVPRALQKYLGGLEVLPVL</sequence>
<accession>A0JR71</accession>
<comment type="function">
    <text evidence="1">Catalyzes the attachment of serine to tRNA(Ser). Is also able to aminoacylate tRNA(Sec) with serine, to form the misacylated tRNA L-seryl-tRNA(Sec), which will be further converted into selenocysteinyl-tRNA(Sec).</text>
</comment>
<comment type="catalytic activity">
    <reaction evidence="1">
        <text>tRNA(Ser) + L-serine + ATP = L-seryl-tRNA(Ser) + AMP + diphosphate + H(+)</text>
        <dbReference type="Rhea" id="RHEA:12292"/>
        <dbReference type="Rhea" id="RHEA-COMP:9669"/>
        <dbReference type="Rhea" id="RHEA-COMP:9703"/>
        <dbReference type="ChEBI" id="CHEBI:15378"/>
        <dbReference type="ChEBI" id="CHEBI:30616"/>
        <dbReference type="ChEBI" id="CHEBI:33019"/>
        <dbReference type="ChEBI" id="CHEBI:33384"/>
        <dbReference type="ChEBI" id="CHEBI:78442"/>
        <dbReference type="ChEBI" id="CHEBI:78533"/>
        <dbReference type="ChEBI" id="CHEBI:456215"/>
        <dbReference type="EC" id="6.1.1.11"/>
    </reaction>
</comment>
<comment type="catalytic activity">
    <reaction evidence="1">
        <text>tRNA(Sec) + L-serine + ATP = L-seryl-tRNA(Sec) + AMP + diphosphate + H(+)</text>
        <dbReference type="Rhea" id="RHEA:42580"/>
        <dbReference type="Rhea" id="RHEA-COMP:9742"/>
        <dbReference type="Rhea" id="RHEA-COMP:10128"/>
        <dbReference type="ChEBI" id="CHEBI:15378"/>
        <dbReference type="ChEBI" id="CHEBI:30616"/>
        <dbReference type="ChEBI" id="CHEBI:33019"/>
        <dbReference type="ChEBI" id="CHEBI:33384"/>
        <dbReference type="ChEBI" id="CHEBI:78442"/>
        <dbReference type="ChEBI" id="CHEBI:78533"/>
        <dbReference type="ChEBI" id="CHEBI:456215"/>
        <dbReference type="EC" id="6.1.1.11"/>
    </reaction>
</comment>
<comment type="pathway">
    <text evidence="1">Aminoacyl-tRNA biosynthesis; selenocysteinyl-tRNA(Sec) biosynthesis; L-seryl-tRNA(Sec) from L-serine and tRNA(Sec): step 1/1.</text>
</comment>
<comment type="subunit">
    <text evidence="1">Homodimer. The tRNA molecule binds across the dimer.</text>
</comment>
<comment type="subcellular location">
    <subcellularLocation>
        <location evidence="1">Cytoplasm</location>
    </subcellularLocation>
</comment>
<comment type="domain">
    <text evidence="1">Consists of two distinct domains, a catalytic core and a N-terminal extension that is involved in tRNA binding.</text>
</comment>
<comment type="similarity">
    <text evidence="1">Belongs to the class-II aminoacyl-tRNA synthetase family. Type-1 seryl-tRNA synthetase subfamily.</text>
</comment>